<evidence type="ECO:0000255" key="1">
    <source>
        <dbReference type="HAMAP-Rule" id="MF_01277"/>
    </source>
</evidence>
<organism>
    <name type="scientific">Edwardsiella ictaluri (strain 93-146)</name>
    <dbReference type="NCBI Taxonomy" id="634503"/>
    <lineage>
        <taxon>Bacteria</taxon>
        <taxon>Pseudomonadati</taxon>
        <taxon>Pseudomonadota</taxon>
        <taxon>Gammaproteobacteria</taxon>
        <taxon>Enterobacterales</taxon>
        <taxon>Hafniaceae</taxon>
        <taxon>Edwardsiella</taxon>
    </lineage>
</organism>
<name>PURR_EDWI9</name>
<keyword id="KW-0238">DNA-binding</keyword>
<keyword id="KW-0658">Purine biosynthesis</keyword>
<keyword id="KW-0678">Repressor</keyword>
<keyword id="KW-0804">Transcription</keyword>
<keyword id="KW-0805">Transcription regulation</keyword>
<reference key="1">
    <citation type="submission" date="2009-03" db="EMBL/GenBank/DDBJ databases">
        <title>Complete genome sequence of Edwardsiella ictaluri 93-146.</title>
        <authorList>
            <person name="Williams M.L."/>
            <person name="Gillaspy A.F."/>
            <person name="Dyer D.W."/>
            <person name="Thune R.L."/>
            <person name="Waldbieser G.C."/>
            <person name="Schuster S.C."/>
            <person name="Gipson J."/>
            <person name="Zaitshik J."/>
            <person name="Landry C."/>
            <person name="Lawrence M.L."/>
        </authorList>
    </citation>
    <scope>NUCLEOTIDE SEQUENCE [LARGE SCALE GENOMIC DNA]</scope>
    <source>
        <strain>93-146</strain>
    </source>
</reference>
<sequence>MATIKDVAKRAGVSTTTVSHVINKTRFVADETKAAVWEAIKELHYSPSAVARSLKVNHTKSIGLLATSSEAPYFAEVIESVENSCYGHGYTLILCNSHNNLEKQKAYLAMLAQKRVDGLLVMCSEYPENLLESLEDYRHIPMVVMDWGTRRSDFTDAIQDNAFEGGYLAGRYLIERGHRDIGAITGPVSRNTGGGRLRGFLKALQEASITPLESWLVEGDFEPESGYTAMQNILSQKQRPTAVFVGGDIMAMGAICAADEMGLRVPQDISVIGYDNVRNARYFTPALTTIHQPKERLGAMAFDMLLDRITSKREDAQTIEVHPKLVERRSVADGPFIDYRR</sequence>
<feature type="chain" id="PRO_1000214200" description="HTH-type transcriptional repressor PurR">
    <location>
        <begin position="1"/>
        <end position="341"/>
    </location>
</feature>
<feature type="domain" description="HTH lacI-type" evidence="1">
    <location>
        <begin position="2"/>
        <end position="56"/>
    </location>
</feature>
<feature type="DNA-binding region" description="H-T-H motif" evidence="1">
    <location>
        <begin position="4"/>
        <end position="23"/>
    </location>
</feature>
<feature type="DNA-binding region" evidence="1">
    <location>
        <begin position="48"/>
        <end position="56"/>
    </location>
</feature>
<feature type="binding site" evidence="1">
    <location>
        <position position="73"/>
    </location>
    <ligand>
        <name>hypoxanthine</name>
        <dbReference type="ChEBI" id="CHEBI:17368"/>
    </ligand>
</feature>
<feature type="binding site" evidence="1">
    <location>
        <position position="190"/>
    </location>
    <ligand>
        <name>hypoxanthine</name>
        <dbReference type="ChEBI" id="CHEBI:17368"/>
    </ligand>
</feature>
<feature type="binding site" evidence="1">
    <location>
        <position position="192"/>
    </location>
    <ligand>
        <name>hypoxanthine</name>
        <dbReference type="ChEBI" id="CHEBI:17368"/>
    </ligand>
</feature>
<feature type="binding site" evidence="1">
    <location>
        <position position="221"/>
    </location>
    <ligand>
        <name>hypoxanthine</name>
        <dbReference type="ChEBI" id="CHEBI:17368"/>
    </ligand>
</feature>
<feature type="binding site" evidence="1">
    <location>
        <position position="275"/>
    </location>
    <ligand>
        <name>hypoxanthine</name>
        <dbReference type="ChEBI" id="CHEBI:17368"/>
    </ligand>
</feature>
<accession>C5BE45</accession>
<comment type="function">
    <text evidence="1">Is the main repressor of the genes involved in the de novo synthesis of purine nucleotides, regulating purB, purC, purEK, purF, purHD, purL, purMN and guaBA expression. PurR is allosterically activated to bind its cognate DNA by binding the purine corepressors, hypoxanthine or guanine, thereby effecting transcription repression.</text>
</comment>
<comment type="pathway">
    <text>Purine metabolism; purine nucleotide biosynthesis [regulation].</text>
</comment>
<comment type="subunit">
    <text evidence="1">Homodimer.</text>
</comment>
<comment type="domain">
    <text evidence="1">Consists of two structural and functional domains: an N-terminal DNA-binding domain, approximately the first 60 residues, and a larger C-terminal domain, approximately 280 residues, which imparts the function of corepressor binding and oligomerization.</text>
</comment>
<dbReference type="EMBL" id="CP001600">
    <property type="protein sequence ID" value="ACR69286.1"/>
    <property type="molecule type" value="Genomic_DNA"/>
</dbReference>
<dbReference type="RefSeq" id="WP_015871417.1">
    <property type="nucleotide sequence ID" value="NZ_CP169062.1"/>
</dbReference>
<dbReference type="SMR" id="C5BE45"/>
<dbReference type="STRING" id="67780.B6E78_03150"/>
<dbReference type="GeneID" id="69539038"/>
<dbReference type="KEGG" id="eic:NT01EI_2110"/>
<dbReference type="PATRIC" id="fig|634503.3.peg.1885"/>
<dbReference type="HOGENOM" id="CLU_037628_6_2_6"/>
<dbReference type="OrthoDB" id="9798934at2"/>
<dbReference type="UniPathway" id="UPA00488"/>
<dbReference type="Proteomes" id="UP000001485">
    <property type="component" value="Chromosome"/>
</dbReference>
<dbReference type="GO" id="GO:0003700">
    <property type="term" value="F:DNA-binding transcription factor activity"/>
    <property type="evidence" value="ECO:0007669"/>
    <property type="project" value="TreeGrafter"/>
</dbReference>
<dbReference type="GO" id="GO:0000976">
    <property type="term" value="F:transcription cis-regulatory region binding"/>
    <property type="evidence" value="ECO:0007669"/>
    <property type="project" value="TreeGrafter"/>
</dbReference>
<dbReference type="GO" id="GO:0045892">
    <property type="term" value="P:negative regulation of DNA-templated transcription"/>
    <property type="evidence" value="ECO:0007669"/>
    <property type="project" value="UniProtKB-UniRule"/>
</dbReference>
<dbReference type="GO" id="GO:0006164">
    <property type="term" value="P:purine nucleotide biosynthetic process"/>
    <property type="evidence" value="ECO:0007669"/>
    <property type="project" value="UniProtKB-UniPathway"/>
</dbReference>
<dbReference type="CDD" id="cd01392">
    <property type="entry name" value="HTH_LacI"/>
    <property type="match status" value="1"/>
</dbReference>
<dbReference type="CDD" id="cd06275">
    <property type="entry name" value="PBP1_PurR"/>
    <property type="match status" value="1"/>
</dbReference>
<dbReference type="FunFam" id="1.10.260.40:FF:000002">
    <property type="entry name" value="HTH-type transcriptional repressor PurR"/>
    <property type="match status" value="1"/>
</dbReference>
<dbReference type="FunFam" id="3.40.50.2300:FF:000045">
    <property type="entry name" value="HTH-type transcriptional repressor PurR"/>
    <property type="match status" value="1"/>
</dbReference>
<dbReference type="Gene3D" id="3.40.50.2300">
    <property type="match status" value="2"/>
</dbReference>
<dbReference type="Gene3D" id="1.10.260.40">
    <property type="entry name" value="lambda repressor-like DNA-binding domains"/>
    <property type="match status" value="1"/>
</dbReference>
<dbReference type="HAMAP" id="MF_01277">
    <property type="entry name" value="HTH_type_PurR"/>
    <property type="match status" value="1"/>
</dbReference>
<dbReference type="InterPro" id="IPR000843">
    <property type="entry name" value="HTH_LacI"/>
</dbReference>
<dbReference type="InterPro" id="IPR046335">
    <property type="entry name" value="LacI/GalR-like_sensor"/>
</dbReference>
<dbReference type="InterPro" id="IPR010982">
    <property type="entry name" value="Lambda_DNA-bd_dom_sf"/>
</dbReference>
<dbReference type="InterPro" id="IPR028082">
    <property type="entry name" value="Peripla_BP_I"/>
</dbReference>
<dbReference type="InterPro" id="IPR023588">
    <property type="entry name" value="Tscrpt_reg_HTH_PurR"/>
</dbReference>
<dbReference type="NCBIfam" id="NF007979">
    <property type="entry name" value="PRK10703.1"/>
    <property type="match status" value="1"/>
</dbReference>
<dbReference type="PANTHER" id="PTHR30146:SF148">
    <property type="entry name" value="HTH-TYPE TRANSCRIPTIONAL REPRESSOR PURR-RELATED"/>
    <property type="match status" value="1"/>
</dbReference>
<dbReference type="PANTHER" id="PTHR30146">
    <property type="entry name" value="LACI-RELATED TRANSCRIPTIONAL REPRESSOR"/>
    <property type="match status" value="1"/>
</dbReference>
<dbReference type="Pfam" id="PF00356">
    <property type="entry name" value="LacI"/>
    <property type="match status" value="1"/>
</dbReference>
<dbReference type="Pfam" id="PF13377">
    <property type="entry name" value="Peripla_BP_3"/>
    <property type="match status" value="1"/>
</dbReference>
<dbReference type="PRINTS" id="PR00036">
    <property type="entry name" value="HTHLACI"/>
</dbReference>
<dbReference type="SMART" id="SM00354">
    <property type="entry name" value="HTH_LACI"/>
    <property type="match status" value="1"/>
</dbReference>
<dbReference type="SUPFAM" id="SSF47413">
    <property type="entry name" value="lambda repressor-like DNA-binding domains"/>
    <property type="match status" value="1"/>
</dbReference>
<dbReference type="SUPFAM" id="SSF53822">
    <property type="entry name" value="Periplasmic binding protein-like I"/>
    <property type="match status" value="1"/>
</dbReference>
<dbReference type="PROSITE" id="PS00356">
    <property type="entry name" value="HTH_LACI_1"/>
    <property type="match status" value="1"/>
</dbReference>
<dbReference type="PROSITE" id="PS50932">
    <property type="entry name" value="HTH_LACI_2"/>
    <property type="match status" value="1"/>
</dbReference>
<gene>
    <name evidence="1" type="primary">purR</name>
    <name type="ordered locus">NT01EI_2110</name>
</gene>
<protein>
    <recommendedName>
        <fullName evidence="1">HTH-type transcriptional repressor PurR</fullName>
    </recommendedName>
    <alternativeName>
        <fullName evidence="1">Pur regulon repressor</fullName>
    </alternativeName>
    <alternativeName>
        <fullName evidence="1">Purine nucleotide synthesis repressor</fullName>
    </alternativeName>
</protein>
<proteinExistence type="inferred from homology"/>